<organism>
    <name type="scientific">Shigella flexneri</name>
    <dbReference type="NCBI Taxonomy" id="623"/>
    <lineage>
        <taxon>Bacteria</taxon>
        <taxon>Pseudomonadati</taxon>
        <taxon>Pseudomonadota</taxon>
        <taxon>Gammaproteobacteria</taxon>
        <taxon>Enterobacterales</taxon>
        <taxon>Enterobacteriaceae</taxon>
        <taxon>Shigella</taxon>
    </lineage>
</organism>
<gene>
    <name evidence="1" type="primary">symE</name>
    <name type="ordered locus">SF4363</name>
    <name type="ordered locus">S4634</name>
</gene>
<reference key="1">
    <citation type="journal article" date="2002" name="Nucleic Acids Res.">
        <title>Genome sequence of Shigella flexneri 2a: insights into pathogenicity through comparison with genomes of Escherichia coli K12 and O157.</title>
        <authorList>
            <person name="Jin Q."/>
            <person name="Yuan Z."/>
            <person name="Xu J."/>
            <person name="Wang Y."/>
            <person name="Shen Y."/>
            <person name="Lu W."/>
            <person name="Wang J."/>
            <person name="Liu H."/>
            <person name="Yang J."/>
            <person name="Yang F."/>
            <person name="Zhang X."/>
            <person name="Zhang J."/>
            <person name="Yang G."/>
            <person name="Wu H."/>
            <person name="Qu D."/>
            <person name="Dong J."/>
            <person name="Sun L."/>
            <person name="Xue Y."/>
            <person name="Zhao A."/>
            <person name="Gao Y."/>
            <person name="Zhu J."/>
            <person name="Kan B."/>
            <person name="Ding K."/>
            <person name="Chen S."/>
            <person name="Cheng H."/>
            <person name="Yao Z."/>
            <person name="He B."/>
            <person name="Chen R."/>
            <person name="Ma D."/>
            <person name="Qiang B."/>
            <person name="Wen Y."/>
            <person name="Hou Y."/>
            <person name="Yu J."/>
        </authorList>
    </citation>
    <scope>NUCLEOTIDE SEQUENCE [LARGE SCALE GENOMIC DNA]</scope>
    <source>
        <strain>301 / Serotype 2a</strain>
    </source>
</reference>
<reference key="2">
    <citation type="journal article" date="2003" name="Infect. Immun.">
        <title>Complete genome sequence and comparative genomics of Shigella flexneri serotype 2a strain 2457T.</title>
        <authorList>
            <person name="Wei J."/>
            <person name="Goldberg M.B."/>
            <person name="Burland V."/>
            <person name="Venkatesan M.M."/>
            <person name="Deng W."/>
            <person name="Fournier G."/>
            <person name="Mayhew G.F."/>
            <person name="Plunkett G. III"/>
            <person name="Rose D.J."/>
            <person name="Darling A."/>
            <person name="Mau B."/>
            <person name="Perna N.T."/>
            <person name="Payne S.M."/>
            <person name="Runyen-Janecky L.J."/>
            <person name="Zhou S."/>
            <person name="Schwartz D.C."/>
            <person name="Blattner F.R."/>
        </authorList>
    </citation>
    <scope>NUCLEOTIDE SEQUENCE [LARGE SCALE GENOMIC DNA]</scope>
    <source>
        <strain>ATCC 700930 / 2457T / Serotype 2a</strain>
    </source>
</reference>
<sequence>MTDTHSIAQPLEAEVSPANNRQLTVSYASRYPDYSRIPAITLKGQWLEAAGFATGTAVDVKVMEGCIVLTAQPAAAEESELMQSLRKVCKLSARKQRQVQEFIGVITGKQKVA</sequence>
<proteinExistence type="inferred from homology"/>
<dbReference type="EC" id="3.1.-.-" evidence="1"/>
<dbReference type="EMBL" id="AE005674">
    <property type="protein sequence ID" value="AAN45779.1"/>
    <property type="molecule type" value="Genomic_DNA"/>
</dbReference>
<dbReference type="EMBL" id="AE014073">
    <property type="status" value="NOT_ANNOTATED_CDS"/>
    <property type="molecule type" value="Genomic_DNA"/>
</dbReference>
<dbReference type="RefSeq" id="NP_710072.1">
    <property type="nucleotide sequence ID" value="NC_004337.2"/>
</dbReference>
<dbReference type="RefSeq" id="WP_000132640.1">
    <property type="nucleotide sequence ID" value="NZ_WPGW01000162.1"/>
</dbReference>
<dbReference type="SMR" id="Q83II5"/>
<dbReference type="STRING" id="198214.SF4363"/>
<dbReference type="PaxDb" id="198214-SF4363"/>
<dbReference type="GeneID" id="1025495"/>
<dbReference type="KEGG" id="sfl:SF4363"/>
<dbReference type="PATRIC" id="fig|198214.7.peg.5144"/>
<dbReference type="HOGENOM" id="CLU_151239_0_0_6"/>
<dbReference type="Proteomes" id="UP000001006">
    <property type="component" value="Chromosome"/>
</dbReference>
<dbReference type="Proteomes" id="UP000002673">
    <property type="component" value="Chromosome"/>
</dbReference>
<dbReference type="GO" id="GO:0005737">
    <property type="term" value="C:cytoplasm"/>
    <property type="evidence" value="ECO:0007669"/>
    <property type="project" value="UniProtKB-SubCell"/>
</dbReference>
<dbReference type="GO" id="GO:0003677">
    <property type="term" value="F:DNA binding"/>
    <property type="evidence" value="ECO:0007669"/>
    <property type="project" value="UniProtKB-KW"/>
</dbReference>
<dbReference type="GO" id="GO:0003723">
    <property type="term" value="F:RNA binding"/>
    <property type="evidence" value="ECO:0007669"/>
    <property type="project" value="UniProtKB-KW"/>
</dbReference>
<dbReference type="GO" id="GO:0004521">
    <property type="term" value="F:RNA endonuclease activity"/>
    <property type="evidence" value="ECO:0007669"/>
    <property type="project" value="UniProtKB-UniRule"/>
</dbReference>
<dbReference type="GO" id="GO:0016070">
    <property type="term" value="P:RNA metabolic process"/>
    <property type="evidence" value="ECO:0007669"/>
    <property type="project" value="InterPro"/>
</dbReference>
<dbReference type="HAMAP" id="MF_01193">
    <property type="entry name" value="Endoribonucl_SymE"/>
    <property type="match status" value="1"/>
</dbReference>
<dbReference type="InterPro" id="IPR007159">
    <property type="entry name" value="SpoVT-AbrB_dom"/>
</dbReference>
<dbReference type="InterPro" id="IPR014944">
    <property type="entry name" value="Toxin_SymE-like"/>
</dbReference>
<dbReference type="InterPro" id="IPR020883">
    <property type="entry name" value="TypeI_TA_SymE"/>
</dbReference>
<dbReference type="NCBIfam" id="NF010128">
    <property type="entry name" value="PRK13605.1"/>
    <property type="match status" value="1"/>
</dbReference>
<dbReference type="Pfam" id="PF08845">
    <property type="entry name" value="SymE_toxin"/>
    <property type="match status" value="1"/>
</dbReference>
<dbReference type="PROSITE" id="PS51740">
    <property type="entry name" value="SPOVT_ABRB"/>
    <property type="match status" value="1"/>
</dbReference>
<keyword id="KW-0963">Cytoplasm</keyword>
<keyword id="KW-0238">DNA-binding</keyword>
<keyword id="KW-0255">Endonuclease</keyword>
<keyword id="KW-0378">Hydrolase</keyword>
<keyword id="KW-0540">Nuclease</keyword>
<keyword id="KW-1185">Reference proteome</keyword>
<keyword id="KW-0694">RNA-binding</keyword>
<accession>Q83II5</accession>
<feature type="chain" id="PRO_0000297828" description="Endoribonuclease SymE">
    <location>
        <begin position="1"/>
        <end position="113"/>
    </location>
</feature>
<feature type="domain" description="SpoVT-AbrB" evidence="2">
    <location>
        <begin position="29"/>
        <end position="74"/>
    </location>
</feature>
<name>SYME_SHIFL</name>
<evidence type="ECO:0000255" key="1">
    <source>
        <dbReference type="HAMAP-Rule" id="MF_01193"/>
    </source>
</evidence>
<evidence type="ECO:0000255" key="2">
    <source>
        <dbReference type="PROSITE-ProRule" id="PRU01076"/>
    </source>
</evidence>
<comment type="function">
    <text evidence="1">Involved in the degradation and recycling of damaged RNA. It is itself a target for degradation by the ATP-dependent protease Lon.</text>
</comment>
<comment type="subcellular location">
    <subcellularLocation>
        <location evidence="1">Cytoplasm</location>
    </subcellularLocation>
</comment>
<comment type="similarity">
    <text evidence="1">Belongs to the SymE family.</text>
</comment>
<protein>
    <recommendedName>
        <fullName evidence="1">Endoribonuclease SymE</fullName>
        <ecNumber evidence="1">3.1.-.-</ecNumber>
    </recommendedName>
</protein>